<protein>
    <recommendedName>
        <fullName evidence="1">Phosphoenolpyruvate carboxylase</fullName>
        <shortName evidence="1">PEPC</shortName>
        <shortName evidence="1">PEPCase</shortName>
        <ecNumber evidence="1">4.1.1.31</ecNumber>
    </recommendedName>
</protein>
<proteinExistence type="inferred from homology"/>
<organism>
    <name type="scientific">Shewanella oneidensis (strain ATCC 700550 / JCM 31522 / CIP 106686 / LMG 19005 / NCIMB 14063 / MR-1)</name>
    <dbReference type="NCBI Taxonomy" id="211586"/>
    <lineage>
        <taxon>Bacteria</taxon>
        <taxon>Pseudomonadati</taxon>
        <taxon>Pseudomonadota</taxon>
        <taxon>Gammaproteobacteria</taxon>
        <taxon>Alteromonadales</taxon>
        <taxon>Shewanellaceae</taxon>
        <taxon>Shewanella</taxon>
    </lineage>
</organism>
<dbReference type="EC" id="4.1.1.31" evidence="1"/>
<dbReference type="EMBL" id="AE014299">
    <property type="protein sequence ID" value="AAN53359.2"/>
    <property type="status" value="ALT_INIT"/>
    <property type="molecule type" value="Genomic_DNA"/>
</dbReference>
<dbReference type="RefSeq" id="NP_715914.2">
    <property type="nucleotide sequence ID" value="NC_004347.2"/>
</dbReference>
<dbReference type="RefSeq" id="WP_011070646.1">
    <property type="nucleotide sequence ID" value="NZ_CP053946.1"/>
</dbReference>
<dbReference type="SMR" id="Q8EK30"/>
<dbReference type="STRING" id="211586.SO_0274"/>
<dbReference type="PaxDb" id="211586-SO_0274"/>
<dbReference type="KEGG" id="son:SO_0274"/>
<dbReference type="PATRIC" id="fig|211586.12.peg.265"/>
<dbReference type="eggNOG" id="COG2352">
    <property type="taxonomic scope" value="Bacteria"/>
</dbReference>
<dbReference type="HOGENOM" id="CLU_006557_2_0_6"/>
<dbReference type="OrthoDB" id="9768133at2"/>
<dbReference type="PhylomeDB" id="Q8EK30"/>
<dbReference type="Proteomes" id="UP000008186">
    <property type="component" value="Chromosome"/>
</dbReference>
<dbReference type="GO" id="GO:0005829">
    <property type="term" value="C:cytosol"/>
    <property type="evidence" value="ECO:0000318"/>
    <property type="project" value="GO_Central"/>
</dbReference>
<dbReference type="GO" id="GO:0000287">
    <property type="term" value="F:magnesium ion binding"/>
    <property type="evidence" value="ECO:0007669"/>
    <property type="project" value="UniProtKB-UniRule"/>
</dbReference>
<dbReference type="GO" id="GO:0008964">
    <property type="term" value="F:phosphoenolpyruvate carboxylase activity"/>
    <property type="evidence" value="ECO:0000318"/>
    <property type="project" value="GO_Central"/>
</dbReference>
<dbReference type="GO" id="GO:0015977">
    <property type="term" value="P:carbon fixation"/>
    <property type="evidence" value="ECO:0007669"/>
    <property type="project" value="UniProtKB-UniRule"/>
</dbReference>
<dbReference type="GO" id="GO:0006107">
    <property type="term" value="P:oxaloacetate metabolic process"/>
    <property type="evidence" value="ECO:0007669"/>
    <property type="project" value="UniProtKB-UniRule"/>
</dbReference>
<dbReference type="GO" id="GO:0006099">
    <property type="term" value="P:tricarboxylic acid cycle"/>
    <property type="evidence" value="ECO:0007669"/>
    <property type="project" value="InterPro"/>
</dbReference>
<dbReference type="Gene3D" id="1.20.1440.90">
    <property type="entry name" value="Phosphoenolpyruvate/pyruvate domain"/>
    <property type="match status" value="1"/>
</dbReference>
<dbReference type="HAMAP" id="MF_00595">
    <property type="entry name" value="PEPcase_type1"/>
    <property type="match status" value="1"/>
</dbReference>
<dbReference type="InterPro" id="IPR021135">
    <property type="entry name" value="PEP_COase"/>
</dbReference>
<dbReference type="InterPro" id="IPR022805">
    <property type="entry name" value="PEP_COase_bac/pln-type"/>
</dbReference>
<dbReference type="InterPro" id="IPR018129">
    <property type="entry name" value="PEP_COase_Lys_AS"/>
</dbReference>
<dbReference type="InterPro" id="IPR033129">
    <property type="entry name" value="PEPCASE_His_AS"/>
</dbReference>
<dbReference type="InterPro" id="IPR015813">
    <property type="entry name" value="Pyrv/PenolPyrv_kinase-like_dom"/>
</dbReference>
<dbReference type="NCBIfam" id="NF000584">
    <property type="entry name" value="PRK00009.1"/>
    <property type="match status" value="1"/>
</dbReference>
<dbReference type="PANTHER" id="PTHR30523">
    <property type="entry name" value="PHOSPHOENOLPYRUVATE CARBOXYLASE"/>
    <property type="match status" value="1"/>
</dbReference>
<dbReference type="PANTHER" id="PTHR30523:SF6">
    <property type="entry name" value="PHOSPHOENOLPYRUVATE CARBOXYLASE"/>
    <property type="match status" value="1"/>
</dbReference>
<dbReference type="Pfam" id="PF00311">
    <property type="entry name" value="PEPcase"/>
    <property type="match status" value="1"/>
</dbReference>
<dbReference type="PRINTS" id="PR00150">
    <property type="entry name" value="PEPCARBXLASE"/>
</dbReference>
<dbReference type="SUPFAM" id="SSF51621">
    <property type="entry name" value="Phosphoenolpyruvate/pyruvate domain"/>
    <property type="match status" value="1"/>
</dbReference>
<dbReference type="PROSITE" id="PS00781">
    <property type="entry name" value="PEPCASE_1"/>
    <property type="match status" value="1"/>
</dbReference>
<dbReference type="PROSITE" id="PS00393">
    <property type="entry name" value="PEPCASE_2"/>
    <property type="match status" value="1"/>
</dbReference>
<name>CAPP_SHEON</name>
<accession>Q8EK30</accession>
<reference key="1">
    <citation type="journal article" date="2002" name="Nat. Biotechnol.">
        <title>Genome sequence of the dissimilatory metal ion-reducing bacterium Shewanella oneidensis.</title>
        <authorList>
            <person name="Heidelberg J.F."/>
            <person name="Paulsen I.T."/>
            <person name="Nelson K.E."/>
            <person name="Gaidos E.J."/>
            <person name="Nelson W.C."/>
            <person name="Read T.D."/>
            <person name="Eisen J.A."/>
            <person name="Seshadri R."/>
            <person name="Ward N.L."/>
            <person name="Methe B.A."/>
            <person name="Clayton R.A."/>
            <person name="Meyer T."/>
            <person name="Tsapin A."/>
            <person name="Scott J."/>
            <person name="Beanan M.J."/>
            <person name="Brinkac L.M."/>
            <person name="Daugherty S.C."/>
            <person name="DeBoy R.T."/>
            <person name="Dodson R.J."/>
            <person name="Durkin A.S."/>
            <person name="Haft D.H."/>
            <person name="Kolonay J.F."/>
            <person name="Madupu R."/>
            <person name="Peterson J.D."/>
            <person name="Umayam L.A."/>
            <person name="White O."/>
            <person name="Wolf A.M."/>
            <person name="Vamathevan J.J."/>
            <person name="Weidman J.F."/>
            <person name="Impraim M."/>
            <person name="Lee K."/>
            <person name="Berry K.J."/>
            <person name="Lee C."/>
            <person name="Mueller J."/>
            <person name="Khouri H.M."/>
            <person name="Gill J."/>
            <person name="Utterback T.R."/>
            <person name="McDonald L.A."/>
            <person name="Feldblyum T.V."/>
            <person name="Smith H.O."/>
            <person name="Venter J.C."/>
            <person name="Nealson K.H."/>
            <person name="Fraser C.M."/>
        </authorList>
    </citation>
    <scope>NUCLEOTIDE SEQUENCE [LARGE SCALE GENOMIC DNA]</scope>
    <source>
        <strain>ATCC 700550 / JCM 31522 / CIP 106686 / LMG 19005 / NCIMB 14063 / MR-1</strain>
    </source>
</reference>
<evidence type="ECO:0000255" key="1">
    <source>
        <dbReference type="HAMAP-Rule" id="MF_00595"/>
    </source>
</evidence>
<evidence type="ECO:0000305" key="2"/>
<sequence>MTDMYASLRSNVSMLGQILGDTMRTHLGDSFLEKVEQIRKLAKDSRRGDEAAREQMLELLTALPDEELVPFAKAFNQFLNLANLSEQFHTISRNCDELVCVPDPVEQLLGRMLNGRVDQTKMLDCLKTLDIDLVLTAHPTEISRRTLIQKYAAIVDCLAEQENNQLSDRERQQINLRLRQLIAQIWHTNEIRRERPTPVDEARWGLSTIEESLWHAVPDFLRQLNDQVQERTGQQLPIDIAPVRFSSWMGGDRDGNPFVTAKVTQEVLDRNRHAAARLFLKDIVLLVGELSMEEANDELKAYTNNSCEPYRFVLRSLRQKLRDTIDYLNARIEGHNPEVDKSTLIWQESDLKAPLEMLYKSLYDCGMRLIANGLLLDILRRLACFGIHMLRLDIRQDAGRHCDVLAELTRYLGMGDFNHWDETEKQAFLLRELSNRRPLIPSNWQPSADVAEVLNTCRLIAKHPAKALGSYVISMASKPSDVLTVLLLLKETGCTHPMRVVPLFETLSDLNNAAACITDLLDIDWYRGYTKGMQEVMIGYSDSAKDAGVMAAAWAQYRAQEQLVAVCNQAGVKLTLFHGRGGSIGRGGGPAHKAILSQPPGSVDGRIRVTEQGEMIRFKFGLPKLAVQSLALYTSAVLEATLLPPPEPKQEWRNCMERIAEESVSAYRGIVREEPDFVAYFRAATPEVELGKLPLGSRPAKRRVDGGIESLRAIPWIFAWSQNRLMLPAWLGAGEALQAACQRGEIGLLQDMEREWPFFSTRISMLEMVYAKAEPNLARYYETCLVSTNLHHLGETLRQRLDLGIKVVLELTKSDTLMAHTPWNRESVKLRNPYIDPLNFLQTELLARTRKETSETPASEHVQLALMLTIAGVAAGMRNTG</sequence>
<comment type="function">
    <text evidence="1">Forms oxaloacetate, a four-carbon dicarboxylic acid source for the tricarboxylic acid cycle.</text>
</comment>
<comment type="catalytic activity">
    <reaction evidence="1">
        <text>oxaloacetate + phosphate = phosphoenolpyruvate + hydrogencarbonate</text>
        <dbReference type="Rhea" id="RHEA:28370"/>
        <dbReference type="ChEBI" id="CHEBI:16452"/>
        <dbReference type="ChEBI" id="CHEBI:17544"/>
        <dbReference type="ChEBI" id="CHEBI:43474"/>
        <dbReference type="ChEBI" id="CHEBI:58702"/>
        <dbReference type="EC" id="4.1.1.31"/>
    </reaction>
</comment>
<comment type="cofactor">
    <cofactor evidence="1">
        <name>Mg(2+)</name>
        <dbReference type="ChEBI" id="CHEBI:18420"/>
    </cofactor>
</comment>
<comment type="similarity">
    <text evidence="1">Belongs to the PEPCase type 1 family.</text>
</comment>
<comment type="sequence caution" evidence="2">
    <conflict type="erroneous initiation">
        <sequence resource="EMBL-CDS" id="AAN53359"/>
    </conflict>
    <text>Extended N-terminus.</text>
</comment>
<keyword id="KW-0120">Carbon dioxide fixation</keyword>
<keyword id="KW-0456">Lyase</keyword>
<keyword id="KW-0460">Magnesium</keyword>
<keyword id="KW-1185">Reference proteome</keyword>
<feature type="chain" id="PRO_0000166623" description="Phosphoenolpyruvate carboxylase">
    <location>
        <begin position="1"/>
        <end position="881"/>
    </location>
</feature>
<feature type="active site" evidence="1">
    <location>
        <position position="138"/>
    </location>
</feature>
<feature type="active site" evidence="1">
    <location>
        <position position="545"/>
    </location>
</feature>
<gene>
    <name evidence="1" type="primary">ppc</name>
    <name type="ordered locus">SO_0274</name>
</gene>